<proteinExistence type="evidence at transcript level"/>
<feature type="chain" id="PRO_0000211305" description="Translationally-controlled tumor protein homolog">
    <location>
        <begin position="1"/>
        <end position="167"/>
    </location>
</feature>
<feature type="domain" description="TCTP" evidence="2">
    <location>
        <begin position="1"/>
        <end position="167"/>
    </location>
</feature>
<protein>
    <recommendedName>
        <fullName>Translationally-controlled tumor protein homolog</fullName>
        <shortName>TCTP</shortName>
    </recommendedName>
    <alternativeName>
        <fullName>23 kDa callus protein</fullName>
    </alternativeName>
    <alternativeName>
        <fullName>PsRCI22-3</fullName>
    </alternativeName>
    <alternativeName>
        <fullName>p23</fullName>
    </alternativeName>
</protein>
<reference key="1">
    <citation type="submission" date="1996-11" db="EMBL/GenBank/DDBJ databases">
        <title>Primary structure of mRNA encoding a putative 23-kDa callus protein.</title>
        <authorList>
            <person name="Woo H.-H."/>
        </authorList>
    </citation>
    <scope>NUCLEOTIDE SEQUENCE [MRNA]</scope>
    <source>
        <strain>cv. Little Marvel</strain>
        <tissue>Root tip</tissue>
    </source>
</reference>
<gene>
    <name type="primary">TCTP</name>
</gene>
<comment type="function">
    <text evidence="1">Involved in calcium binding and microtubule stabilization.</text>
</comment>
<comment type="subcellular location">
    <subcellularLocation>
        <location evidence="1">Cytoplasm</location>
    </subcellularLocation>
</comment>
<comment type="induction">
    <text>Induced in root tips during the externally-induced root cap cell differentiation.</text>
</comment>
<comment type="similarity">
    <text evidence="2">Belongs to the TCTP family.</text>
</comment>
<dbReference type="EMBL" id="L47968">
    <property type="protein sequence ID" value="AAB19090.1"/>
    <property type="molecule type" value="mRNA"/>
</dbReference>
<dbReference type="PIR" id="T06567">
    <property type="entry name" value="T06567"/>
</dbReference>
<dbReference type="SMR" id="P50906"/>
<dbReference type="EnsemblPlants" id="Psat1g154600.1">
    <property type="protein sequence ID" value="Psat1g154600.1.cds"/>
    <property type="gene ID" value="Psat1g154600"/>
</dbReference>
<dbReference type="Gramene" id="Psat1g154600.1">
    <property type="protein sequence ID" value="Psat1g154600.1.cds"/>
    <property type="gene ID" value="Psat1g154600"/>
</dbReference>
<dbReference type="OrthoDB" id="10248936at2759"/>
<dbReference type="GO" id="GO:0005737">
    <property type="term" value="C:cytoplasm"/>
    <property type="evidence" value="ECO:0007669"/>
    <property type="project" value="UniProtKB-SubCell"/>
</dbReference>
<dbReference type="GO" id="GO:0005509">
    <property type="term" value="F:calcium ion binding"/>
    <property type="evidence" value="ECO:0007669"/>
    <property type="project" value="TreeGrafter"/>
</dbReference>
<dbReference type="FunFam" id="2.170.150.10:FF:000003">
    <property type="entry name" value="Translationally-controlled tumor protein homolog"/>
    <property type="match status" value="1"/>
</dbReference>
<dbReference type="Gene3D" id="2.170.150.10">
    <property type="entry name" value="Metal Binding Protein, Guanine Nucleotide Exchange Factor, Chain A"/>
    <property type="match status" value="1"/>
</dbReference>
<dbReference type="InterPro" id="IPR011057">
    <property type="entry name" value="Mss4-like_sf"/>
</dbReference>
<dbReference type="InterPro" id="IPR011323">
    <property type="entry name" value="Mss4/transl-control_tumour"/>
</dbReference>
<dbReference type="InterPro" id="IPR034737">
    <property type="entry name" value="TCTP"/>
</dbReference>
<dbReference type="InterPro" id="IPR018103">
    <property type="entry name" value="Translation_control_tumour_CS"/>
</dbReference>
<dbReference type="InterPro" id="IPR018105">
    <property type="entry name" value="Translational_control_tumour_p"/>
</dbReference>
<dbReference type="PANTHER" id="PTHR11991">
    <property type="entry name" value="TRANSLATIONALLY CONTROLLED TUMOR PROTEIN-RELATED"/>
    <property type="match status" value="1"/>
</dbReference>
<dbReference type="PANTHER" id="PTHR11991:SF19">
    <property type="entry name" value="TRANSLATIONALLY CONTROLLED TUMOR PROTEIN-RELATED"/>
    <property type="match status" value="1"/>
</dbReference>
<dbReference type="Pfam" id="PF00838">
    <property type="entry name" value="TCTP"/>
    <property type="match status" value="1"/>
</dbReference>
<dbReference type="PRINTS" id="PR01653">
    <property type="entry name" value="TCTPROTEIN"/>
</dbReference>
<dbReference type="SUPFAM" id="SSF51316">
    <property type="entry name" value="Mss4-like"/>
    <property type="match status" value="1"/>
</dbReference>
<dbReference type="PROSITE" id="PS01002">
    <property type="entry name" value="TCTP_1"/>
    <property type="match status" value="1"/>
</dbReference>
<dbReference type="PROSITE" id="PS01003">
    <property type="entry name" value="TCTP_2"/>
    <property type="match status" value="1"/>
</dbReference>
<dbReference type="PROSITE" id="PS51797">
    <property type="entry name" value="TCTP_3"/>
    <property type="match status" value="1"/>
</dbReference>
<evidence type="ECO:0000250" key="1"/>
<evidence type="ECO:0000255" key="2">
    <source>
        <dbReference type="PROSITE-ProRule" id="PRU01133"/>
    </source>
</evidence>
<name>TCTP_PEA</name>
<sequence length="167" mass="18889">MLVYQDLLTGDELLSDSYPYKEIENGMLWEVEGKWVVKGAVDVNIGANPSAEGGEDEGVDDTAVKVVDIVDVFRLQEQPPFDKKQFLGFVKKYIKLLTPKLEAEKQEHFKKNIEGATKYLLGKLKDLQFFVGESMHDDGSLVFAYYKDGAADPTFLYFSFALKEIKC</sequence>
<organism>
    <name type="scientific">Pisum sativum</name>
    <name type="common">Garden pea</name>
    <name type="synonym">Lathyrus oleraceus</name>
    <dbReference type="NCBI Taxonomy" id="3888"/>
    <lineage>
        <taxon>Eukaryota</taxon>
        <taxon>Viridiplantae</taxon>
        <taxon>Streptophyta</taxon>
        <taxon>Embryophyta</taxon>
        <taxon>Tracheophyta</taxon>
        <taxon>Spermatophyta</taxon>
        <taxon>Magnoliopsida</taxon>
        <taxon>eudicotyledons</taxon>
        <taxon>Gunneridae</taxon>
        <taxon>Pentapetalae</taxon>
        <taxon>rosids</taxon>
        <taxon>fabids</taxon>
        <taxon>Fabales</taxon>
        <taxon>Fabaceae</taxon>
        <taxon>Papilionoideae</taxon>
        <taxon>50 kb inversion clade</taxon>
        <taxon>NPAAA clade</taxon>
        <taxon>Hologalegina</taxon>
        <taxon>IRL clade</taxon>
        <taxon>Fabeae</taxon>
        <taxon>Pisum</taxon>
    </lineage>
</organism>
<accession>P50906</accession>
<keyword id="KW-0106">Calcium</keyword>
<keyword id="KW-0963">Cytoplasm</keyword>